<comment type="function">
    <text evidence="1">Located at the top of the head of the 30S subunit, it contacts several helices of the 16S rRNA. In the 70S ribosome it contacts the 23S rRNA (bridge B1a) and protein L5 of the 50S subunit (bridge B1b), connecting the 2 subunits; these bridges are implicated in subunit movement. Contacts the tRNAs in the A and P-sites.</text>
</comment>
<comment type="subunit">
    <text evidence="1">Part of the 30S ribosomal subunit. Forms a loose heterodimer with protein S19. Forms two bridges to the 50S subunit in the 70S ribosome.</text>
</comment>
<comment type="similarity">
    <text evidence="1">Belongs to the universal ribosomal protein uS13 family.</text>
</comment>
<gene>
    <name evidence="1" type="primary">rpsM</name>
    <name type="ordered locus">SAOUHSC_02487</name>
</gene>
<sequence length="121" mass="13719">MARIAGVDIPREKRVVISLTYIYGIGTSTAQKILEEANVSADTRVKDLTDDELGRIREVVDGYKVEGDLRRETNLNIKRLMEISSYRGIRHRRGLPVRGQKTKNNARTRKGPVKTVANKKK</sequence>
<proteinExistence type="evidence at protein level"/>
<dbReference type="EMBL" id="CP000253">
    <property type="protein sequence ID" value="ABD31506.1"/>
    <property type="molecule type" value="Genomic_DNA"/>
</dbReference>
<dbReference type="RefSeq" id="WP_000090796.1">
    <property type="nucleotide sequence ID" value="NZ_LS483365.1"/>
</dbReference>
<dbReference type="RefSeq" id="YP_500955.1">
    <property type="nucleotide sequence ID" value="NC_007795.1"/>
</dbReference>
<dbReference type="PDB" id="5LI0">
    <property type="method" value="EM"/>
    <property type="resolution" value="3.80 A"/>
    <property type="chains" value="m=2-120"/>
</dbReference>
<dbReference type="PDB" id="5ND8">
    <property type="method" value="EM"/>
    <property type="resolution" value="3.70 A"/>
    <property type="chains" value="m=1-121"/>
</dbReference>
<dbReference type="PDB" id="5ND9">
    <property type="method" value="EM"/>
    <property type="resolution" value="3.70 A"/>
    <property type="chains" value="m=1-121"/>
</dbReference>
<dbReference type="PDB" id="5TCU">
    <property type="method" value="EM"/>
    <property type="resolution" value="3.90 A"/>
    <property type="chains" value="S4=2-114"/>
</dbReference>
<dbReference type="PDB" id="6YEF">
    <property type="method" value="EM"/>
    <property type="resolution" value="3.20 A"/>
    <property type="chains" value="m=1-121"/>
</dbReference>
<dbReference type="PDB" id="7BGE">
    <property type="method" value="EM"/>
    <property type="resolution" value="3.60 A"/>
    <property type="chains" value="m=1-121"/>
</dbReference>
<dbReference type="PDB" id="7KWG">
    <property type="method" value="EM"/>
    <property type="resolution" value="3.75 A"/>
    <property type="chains" value="m=1-121"/>
</dbReference>
<dbReference type="PDB" id="7NHL">
    <property type="method" value="EM"/>
    <property type="resolution" value="3.10 A"/>
    <property type="chains" value="n=1-121"/>
</dbReference>
<dbReference type="PDB" id="7NHM">
    <property type="method" value="EM"/>
    <property type="resolution" value="3.10 A"/>
    <property type="chains" value="n=1-121"/>
</dbReference>
<dbReference type="PDB" id="8BH6">
    <property type="method" value="EM"/>
    <property type="resolution" value="3.70 A"/>
    <property type="chains" value="m=1-121"/>
</dbReference>
<dbReference type="PDB" id="8BH7">
    <property type="method" value="EM"/>
    <property type="resolution" value="4.23 A"/>
    <property type="chains" value="m=1-121"/>
</dbReference>
<dbReference type="PDB" id="8BYV">
    <property type="method" value="EM"/>
    <property type="resolution" value="2.89 A"/>
    <property type="chains" value="m=1-121"/>
</dbReference>
<dbReference type="PDB" id="8P2F">
    <property type="method" value="EM"/>
    <property type="resolution" value="2.44 A"/>
    <property type="chains" value="n=1-121"/>
</dbReference>
<dbReference type="PDB" id="8P2G">
    <property type="method" value="EM"/>
    <property type="resolution" value="2.02 A"/>
    <property type="chains" value="n=1-121"/>
</dbReference>
<dbReference type="PDB" id="8P2H">
    <property type="method" value="EM"/>
    <property type="resolution" value="2.49 A"/>
    <property type="chains" value="n=1-121"/>
</dbReference>
<dbReference type="PDBsum" id="5LI0"/>
<dbReference type="PDBsum" id="5ND8"/>
<dbReference type="PDBsum" id="5ND9"/>
<dbReference type="PDBsum" id="5TCU"/>
<dbReference type="PDBsum" id="6YEF"/>
<dbReference type="PDBsum" id="7BGE"/>
<dbReference type="PDBsum" id="7KWG"/>
<dbReference type="PDBsum" id="7NHL"/>
<dbReference type="PDBsum" id="7NHM"/>
<dbReference type="PDBsum" id="8BH6"/>
<dbReference type="PDBsum" id="8BH7"/>
<dbReference type="PDBsum" id="8BYV"/>
<dbReference type="PDBsum" id="8P2F"/>
<dbReference type="PDBsum" id="8P2G"/>
<dbReference type="PDBsum" id="8P2H"/>
<dbReference type="EMDB" id="EMD-10791"/>
<dbReference type="EMDB" id="EMD-12179"/>
<dbReference type="EMDB" id="EMD-12332"/>
<dbReference type="EMDB" id="EMD-12333"/>
<dbReference type="EMDB" id="EMD-16048"/>
<dbReference type="EMDB" id="EMD-16049"/>
<dbReference type="EMDB" id="EMD-16334"/>
<dbReference type="EMDB" id="EMD-17363"/>
<dbReference type="EMDB" id="EMD-17364"/>
<dbReference type="EMDB" id="EMD-17365"/>
<dbReference type="EMDB" id="EMD-23052"/>
<dbReference type="EMDB" id="EMD-3624"/>
<dbReference type="EMDB" id="EMD-3625"/>
<dbReference type="EMDB" id="EMD-4050"/>
<dbReference type="EMDB" id="EMD-8402"/>
<dbReference type="SMR" id="Q2FW30"/>
<dbReference type="IntAct" id="Q2FW30">
    <property type="interactions" value="1"/>
</dbReference>
<dbReference type="STRING" id="93061.SAOUHSC_02487"/>
<dbReference type="PaxDb" id="1280-SAXN108_2476"/>
<dbReference type="GeneID" id="3920864"/>
<dbReference type="GeneID" id="66840438"/>
<dbReference type="KEGG" id="sao:SAOUHSC_02487"/>
<dbReference type="PATRIC" id="fig|93061.5.peg.2243"/>
<dbReference type="eggNOG" id="COG0099">
    <property type="taxonomic scope" value="Bacteria"/>
</dbReference>
<dbReference type="HOGENOM" id="CLU_103849_1_1_9"/>
<dbReference type="OrthoDB" id="9803610at2"/>
<dbReference type="PRO" id="PR:Q2FW30"/>
<dbReference type="Proteomes" id="UP000008816">
    <property type="component" value="Chromosome"/>
</dbReference>
<dbReference type="GO" id="GO:0005829">
    <property type="term" value="C:cytosol"/>
    <property type="evidence" value="ECO:0000318"/>
    <property type="project" value="GO_Central"/>
</dbReference>
<dbReference type="GO" id="GO:0015935">
    <property type="term" value="C:small ribosomal subunit"/>
    <property type="evidence" value="ECO:0000318"/>
    <property type="project" value="GO_Central"/>
</dbReference>
<dbReference type="GO" id="GO:0019843">
    <property type="term" value="F:rRNA binding"/>
    <property type="evidence" value="ECO:0007669"/>
    <property type="project" value="UniProtKB-UniRule"/>
</dbReference>
<dbReference type="GO" id="GO:0003735">
    <property type="term" value="F:structural constituent of ribosome"/>
    <property type="evidence" value="ECO:0007669"/>
    <property type="project" value="InterPro"/>
</dbReference>
<dbReference type="GO" id="GO:0000049">
    <property type="term" value="F:tRNA binding"/>
    <property type="evidence" value="ECO:0007669"/>
    <property type="project" value="UniProtKB-UniRule"/>
</dbReference>
<dbReference type="GO" id="GO:0006412">
    <property type="term" value="P:translation"/>
    <property type="evidence" value="ECO:0007669"/>
    <property type="project" value="UniProtKB-UniRule"/>
</dbReference>
<dbReference type="FunFam" id="1.10.8.50:FF:000001">
    <property type="entry name" value="30S ribosomal protein S13"/>
    <property type="match status" value="1"/>
</dbReference>
<dbReference type="FunFam" id="4.10.910.10:FF:000001">
    <property type="entry name" value="30S ribosomal protein S13"/>
    <property type="match status" value="1"/>
</dbReference>
<dbReference type="Gene3D" id="1.10.8.50">
    <property type="match status" value="1"/>
</dbReference>
<dbReference type="Gene3D" id="4.10.910.10">
    <property type="entry name" value="30s ribosomal protein s13, domain 2"/>
    <property type="match status" value="1"/>
</dbReference>
<dbReference type="HAMAP" id="MF_01315">
    <property type="entry name" value="Ribosomal_uS13"/>
    <property type="match status" value="1"/>
</dbReference>
<dbReference type="InterPro" id="IPR027437">
    <property type="entry name" value="Rbsml_uS13_C"/>
</dbReference>
<dbReference type="InterPro" id="IPR001892">
    <property type="entry name" value="Ribosomal_uS13"/>
</dbReference>
<dbReference type="InterPro" id="IPR010979">
    <property type="entry name" value="Ribosomal_uS13-like_H2TH"/>
</dbReference>
<dbReference type="InterPro" id="IPR019980">
    <property type="entry name" value="Ribosomal_uS13_bac-type"/>
</dbReference>
<dbReference type="InterPro" id="IPR018269">
    <property type="entry name" value="Ribosomal_uS13_CS"/>
</dbReference>
<dbReference type="NCBIfam" id="TIGR03631">
    <property type="entry name" value="uS13_bact"/>
    <property type="match status" value="1"/>
</dbReference>
<dbReference type="PANTHER" id="PTHR10871">
    <property type="entry name" value="30S RIBOSOMAL PROTEIN S13/40S RIBOSOMAL PROTEIN S18"/>
    <property type="match status" value="1"/>
</dbReference>
<dbReference type="PANTHER" id="PTHR10871:SF1">
    <property type="entry name" value="SMALL RIBOSOMAL SUBUNIT PROTEIN US13M"/>
    <property type="match status" value="1"/>
</dbReference>
<dbReference type="Pfam" id="PF00416">
    <property type="entry name" value="Ribosomal_S13"/>
    <property type="match status" value="1"/>
</dbReference>
<dbReference type="PIRSF" id="PIRSF002134">
    <property type="entry name" value="Ribosomal_S13"/>
    <property type="match status" value="1"/>
</dbReference>
<dbReference type="SUPFAM" id="SSF46946">
    <property type="entry name" value="S13-like H2TH domain"/>
    <property type="match status" value="1"/>
</dbReference>
<dbReference type="PROSITE" id="PS00646">
    <property type="entry name" value="RIBOSOMAL_S13_1"/>
    <property type="match status" value="1"/>
</dbReference>
<dbReference type="PROSITE" id="PS50159">
    <property type="entry name" value="RIBOSOMAL_S13_2"/>
    <property type="match status" value="1"/>
</dbReference>
<accession>Q2FW30</accession>
<protein>
    <recommendedName>
        <fullName evidence="1">Small ribosomal subunit protein uS13</fullName>
    </recommendedName>
    <alternativeName>
        <fullName evidence="3">30S ribosomal protein S13</fullName>
    </alternativeName>
</protein>
<evidence type="ECO:0000255" key="1">
    <source>
        <dbReference type="HAMAP-Rule" id="MF_01315"/>
    </source>
</evidence>
<evidence type="ECO:0000256" key="2">
    <source>
        <dbReference type="SAM" id="MobiDB-lite"/>
    </source>
</evidence>
<evidence type="ECO:0000305" key="3"/>
<evidence type="ECO:0007829" key="4">
    <source>
        <dbReference type="PDB" id="8BYV"/>
    </source>
</evidence>
<name>RS13_STAA8</name>
<keyword id="KW-0002">3D-structure</keyword>
<keyword id="KW-1185">Reference proteome</keyword>
<keyword id="KW-0687">Ribonucleoprotein</keyword>
<keyword id="KW-0689">Ribosomal protein</keyword>
<keyword id="KW-0694">RNA-binding</keyword>
<keyword id="KW-0699">rRNA-binding</keyword>
<keyword id="KW-0820">tRNA-binding</keyword>
<reference key="1">
    <citation type="book" date="2006" name="Gram positive pathogens, 2nd edition">
        <title>The Staphylococcus aureus NCTC 8325 genome.</title>
        <editorList>
            <person name="Fischetti V."/>
            <person name="Novick R."/>
            <person name="Ferretti J."/>
            <person name="Portnoy D."/>
            <person name="Rood J."/>
        </editorList>
        <authorList>
            <person name="Gillaspy A.F."/>
            <person name="Worrell V."/>
            <person name="Orvis J."/>
            <person name="Roe B.A."/>
            <person name="Dyer D.W."/>
            <person name="Iandolo J.J."/>
        </authorList>
    </citation>
    <scope>NUCLEOTIDE SEQUENCE [LARGE SCALE GENOMIC DNA]</scope>
    <source>
        <strain>NCTC 8325 / PS 47</strain>
    </source>
</reference>
<feature type="chain" id="PRO_0000306715" description="Small ribosomal subunit protein uS13">
    <location>
        <begin position="1"/>
        <end position="121"/>
    </location>
</feature>
<feature type="region of interest" description="Disordered" evidence="2">
    <location>
        <begin position="91"/>
        <end position="121"/>
    </location>
</feature>
<feature type="strand" evidence="4">
    <location>
        <begin position="4"/>
        <end position="7"/>
    </location>
</feature>
<feature type="helix" evidence="4">
    <location>
        <begin position="15"/>
        <end position="18"/>
    </location>
</feature>
<feature type="strand" evidence="4">
    <location>
        <begin position="21"/>
        <end position="25"/>
    </location>
</feature>
<feature type="helix" evidence="4">
    <location>
        <begin position="30"/>
        <end position="36"/>
    </location>
</feature>
<feature type="strand" evidence="4">
    <location>
        <begin position="42"/>
        <end position="45"/>
    </location>
</feature>
<feature type="helix" evidence="4">
    <location>
        <begin position="56"/>
        <end position="59"/>
    </location>
</feature>
<feature type="turn" evidence="4">
    <location>
        <begin position="60"/>
        <end position="62"/>
    </location>
</feature>
<feature type="helix" evidence="4">
    <location>
        <begin position="68"/>
        <end position="82"/>
    </location>
</feature>
<feature type="helix" evidence="4">
    <location>
        <begin position="88"/>
        <end position="92"/>
    </location>
</feature>
<feature type="turn" evidence="4">
    <location>
        <begin position="107"/>
        <end position="109"/>
    </location>
</feature>
<organism>
    <name type="scientific">Staphylococcus aureus (strain NCTC 8325 / PS 47)</name>
    <dbReference type="NCBI Taxonomy" id="93061"/>
    <lineage>
        <taxon>Bacteria</taxon>
        <taxon>Bacillati</taxon>
        <taxon>Bacillota</taxon>
        <taxon>Bacilli</taxon>
        <taxon>Bacillales</taxon>
        <taxon>Staphylococcaceae</taxon>
        <taxon>Staphylococcus</taxon>
    </lineage>
</organism>